<keyword id="KW-0375">Hydrogen ion transport</keyword>
<keyword id="KW-0406">Ion transport</keyword>
<keyword id="KW-1185">Reference proteome</keyword>
<keyword id="KW-0813">Transport</keyword>
<comment type="function">
    <text evidence="1 2">Subunit of the V0 complex of vacuolar(H+)-ATPase (V-ATPase), a multisubunit enzyme composed of a peripheral complex (V1) that hydrolyzes ATP and a membrane integral complex (V0) that translocates protons. V-ATPase is responsible for acidifying and maintaining the pH of intracellular compartments and in some cell types, is targeted to the plasma membrane, where it is responsible for acidifying the extracellular environment (By similarity). May play a role in coupling of proton transport and ATP hydrolysis (By similarity).</text>
</comment>
<comment type="subunit">
    <text evidence="1">V-ATPase is a heteromultimeric enzyme made up of two complexes: the ATP-hydrolytic V1 complex and the proton translocation V0 complex. The V1 complex consists of three catalytic AB heterodimers that form a heterohexamer, three peripheral stalks each consisting of EG heterodimers, one central rotor including subunits D and F, and the regulatory subunits C and H. The proton translocation complex V0 consists of the proton transport subunit a, a ring of proteolipid subunits c9c'', rotary subunit d, subunits e and f, and the accessory subunits VhaAC45 and ATP6AP2.</text>
</comment>
<comment type="similarity">
    <text evidence="3">Belongs to the V-ATPase V0D/AC39 subunit family.</text>
</comment>
<dbReference type="EMBL" id="AE014297">
    <property type="protein sequence ID" value="AAF56104.1"/>
    <property type="molecule type" value="Genomic_DNA"/>
</dbReference>
<dbReference type="EMBL" id="AY118615">
    <property type="protein sequence ID" value="AAM49984.1"/>
    <property type="molecule type" value="mRNA"/>
</dbReference>
<dbReference type="EMBL" id="BT072817">
    <property type="protein sequence ID" value="ACN62420.1"/>
    <property type="molecule type" value="mRNA"/>
</dbReference>
<dbReference type="RefSeq" id="NP_651128.1">
    <property type="nucleotide sequence ID" value="NM_142871.1"/>
</dbReference>
<dbReference type="SMR" id="Q9VCQ3"/>
<dbReference type="FunCoup" id="Q9VCQ3">
    <property type="interactions" value="293"/>
</dbReference>
<dbReference type="STRING" id="7227.FBpp0083793"/>
<dbReference type="PaxDb" id="7227-FBpp0083793"/>
<dbReference type="DNASU" id="42739"/>
<dbReference type="EnsemblMetazoa" id="FBtr0084401">
    <property type="protein sequence ID" value="FBpp0083793"/>
    <property type="gene ID" value="FBgn0039058"/>
</dbReference>
<dbReference type="GeneID" id="42739"/>
<dbReference type="KEGG" id="dme:Dmel_CG4624"/>
<dbReference type="UCSC" id="CG4624-RA">
    <property type="organism name" value="d. melanogaster"/>
</dbReference>
<dbReference type="AGR" id="FB:FBgn0039058"/>
<dbReference type="CTD" id="42739"/>
<dbReference type="FlyBase" id="FBgn0039058">
    <property type="gene designation" value="VhaAC39-2"/>
</dbReference>
<dbReference type="VEuPathDB" id="VectorBase:FBgn0039058"/>
<dbReference type="eggNOG" id="KOG2957">
    <property type="taxonomic scope" value="Eukaryota"/>
</dbReference>
<dbReference type="GeneTree" id="ENSGT00390000002200"/>
<dbReference type="HOGENOM" id="CLU_051277_0_0_1"/>
<dbReference type="InParanoid" id="Q9VCQ3"/>
<dbReference type="OMA" id="RYEHMID"/>
<dbReference type="OrthoDB" id="10250083at2759"/>
<dbReference type="PhylomeDB" id="Q9VCQ3"/>
<dbReference type="Reactome" id="R-DME-1222556">
    <property type="pathway name" value="ROS and RNS production in phagocytes"/>
</dbReference>
<dbReference type="Reactome" id="R-DME-77387">
    <property type="pathway name" value="Insulin receptor recycling"/>
</dbReference>
<dbReference type="Reactome" id="R-DME-917977">
    <property type="pathway name" value="Transferrin endocytosis and recycling"/>
</dbReference>
<dbReference type="Reactome" id="R-DME-9639288">
    <property type="pathway name" value="Amino acids regulate mTORC1"/>
</dbReference>
<dbReference type="Reactome" id="R-DME-983712">
    <property type="pathway name" value="Ion channel transport"/>
</dbReference>
<dbReference type="BioGRID-ORCS" id="42739">
    <property type="hits" value="0 hits in 3 CRISPR screens"/>
</dbReference>
<dbReference type="GenomeRNAi" id="42739"/>
<dbReference type="PRO" id="PR:Q9VCQ3"/>
<dbReference type="Proteomes" id="UP000000803">
    <property type="component" value="Chromosome 3R"/>
</dbReference>
<dbReference type="Bgee" id="FBgn0039058">
    <property type="expression patterns" value="Expressed in enterocyte of posterior adult midgut epithelium (Drosophila) in digestive tract and 15 other cell types or tissues"/>
</dbReference>
<dbReference type="GO" id="GO:0005769">
    <property type="term" value="C:early endosome"/>
    <property type="evidence" value="ECO:0000318"/>
    <property type="project" value="GO_Central"/>
</dbReference>
<dbReference type="GO" id="GO:0033181">
    <property type="term" value="C:plasma membrane proton-transporting V-type ATPase complex"/>
    <property type="evidence" value="ECO:0000318"/>
    <property type="project" value="GO_Central"/>
</dbReference>
<dbReference type="GO" id="GO:0033176">
    <property type="term" value="C:proton-transporting V-type ATPase complex"/>
    <property type="evidence" value="ECO:0000250"/>
    <property type="project" value="FlyBase"/>
</dbReference>
<dbReference type="GO" id="GO:0033179">
    <property type="term" value="C:proton-transporting V-type ATPase, V0 domain"/>
    <property type="evidence" value="ECO:0007669"/>
    <property type="project" value="InterPro"/>
</dbReference>
<dbReference type="GO" id="GO:0016471">
    <property type="term" value="C:vacuolar proton-transporting V-type ATPase complex"/>
    <property type="evidence" value="ECO:0000318"/>
    <property type="project" value="GO_Central"/>
</dbReference>
<dbReference type="GO" id="GO:0046961">
    <property type="term" value="F:proton-transporting ATPase activity, rotational mechanism"/>
    <property type="evidence" value="ECO:0007669"/>
    <property type="project" value="InterPro"/>
</dbReference>
<dbReference type="GO" id="GO:1902600">
    <property type="term" value="P:proton transmembrane transport"/>
    <property type="evidence" value="ECO:0000305"/>
    <property type="project" value="FlyBase"/>
</dbReference>
<dbReference type="GO" id="GO:0007430">
    <property type="term" value="P:terminal branching, open tracheal system"/>
    <property type="evidence" value="ECO:0000315"/>
    <property type="project" value="FlyBase"/>
</dbReference>
<dbReference type="GO" id="GO:0007035">
    <property type="term" value="P:vacuolar acidification"/>
    <property type="evidence" value="ECO:0000318"/>
    <property type="project" value="GO_Central"/>
</dbReference>
<dbReference type="GO" id="GO:0007034">
    <property type="term" value="P:vacuolar transport"/>
    <property type="evidence" value="ECO:0000318"/>
    <property type="project" value="GO_Central"/>
</dbReference>
<dbReference type="FunFam" id="1.20.1690.10:FF:000001">
    <property type="entry name" value="V-type proton ATPase subunit"/>
    <property type="match status" value="1"/>
</dbReference>
<dbReference type="Gene3D" id="1.10.132.50">
    <property type="entry name" value="ATP synthase (C/AC39) subunit, domain 3"/>
    <property type="match status" value="1"/>
</dbReference>
<dbReference type="Gene3D" id="1.20.1690.10">
    <property type="entry name" value="V-type ATP synthase subunit C domain"/>
    <property type="match status" value="2"/>
</dbReference>
<dbReference type="InterPro" id="IPR036079">
    <property type="entry name" value="ATPase_csu/dsu_sf"/>
</dbReference>
<dbReference type="InterPro" id="IPR002843">
    <property type="entry name" value="ATPase_V0-cplx_csu/dsu"/>
</dbReference>
<dbReference type="InterPro" id="IPR016727">
    <property type="entry name" value="ATPase_V0-cplx_dsu"/>
</dbReference>
<dbReference type="InterPro" id="IPR035067">
    <property type="entry name" value="V-type_ATPase_csu/dsu"/>
</dbReference>
<dbReference type="InterPro" id="IPR044911">
    <property type="entry name" value="V-type_ATPase_csu/dsu_dom_3"/>
</dbReference>
<dbReference type="PANTHER" id="PTHR11028">
    <property type="entry name" value="VACUOLAR ATP SYNTHASE SUBUNIT AC39"/>
    <property type="match status" value="1"/>
</dbReference>
<dbReference type="Pfam" id="PF01992">
    <property type="entry name" value="vATP-synt_AC39"/>
    <property type="match status" value="1"/>
</dbReference>
<dbReference type="PIRSF" id="PIRSF018497">
    <property type="entry name" value="V-ATP_synth_D"/>
    <property type="match status" value="1"/>
</dbReference>
<dbReference type="SUPFAM" id="SSF103486">
    <property type="entry name" value="V-type ATP synthase subunit C"/>
    <property type="match status" value="1"/>
</dbReference>
<organism>
    <name type="scientific">Drosophila melanogaster</name>
    <name type="common">Fruit fly</name>
    <dbReference type="NCBI Taxonomy" id="7227"/>
    <lineage>
        <taxon>Eukaryota</taxon>
        <taxon>Metazoa</taxon>
        <taxon>Ecdysozoa</taxon>
        <taxon>Arthropoda</taxon>
        <taxon>Hexapoda</taxon>
        <taxon>Insecta</taxon>
        <taxon>Pterygota</taxon>
        <taxon>Neoptera</taxon>
        <taxon>Endopterygota</taxon>
        <taxon>Diptera</taxon>
        <taxon>Brachycera</taxon>
        <taxon>Muscomorpha</taxon>
        <taxon>Ephydroidea</taxon>
        <taxon>Drosophilidae</taxon>
        <taxon>Drosophila</taxon>
        <taxon>Sophophora</taxon>
    </lineage>
</organism>
<name>VA0D2_DROME</name>
<gene>
    <name type="primary">VhaAC39-2</name>
    <name type="ORF">CG4624</name>
</gene>
<protein>
    <recommendedName>
        <fullName>Probable V-type proton ATPase subunit d 2</fullName>
        <shortName>V-ATPase subunit d 2</shortName>
    </recommendedName>
    <alternativeName>
        <fullName>Vacuolar H+ ATPase subunit AC39-2</fullName>
    </alternativeName>
    <alternativeName>
        <fullName>Vacuolar proton pump subunit d 2</fullName>
    </alternativeName>
</protein>
<accession>Q9VCQ3</accession>
<accession>C0PUW1</accession>
<accession>Q8MST4</accession>
<reference key="1">
    <citation type="journal article" date="2000" name="Science">
        <title>The genome sequence of Drosophila melanogaster.</title>
        <authorList>
            <person name="Adams M.D."/>
            <person name="Celniker S.E."/>
            <person name="Holt R.A."/>
            <person name="Evans C.A."/>
            <person name="Gocayne J.D."/>
            <person name="Amanatides P.G."/>
            <person name="Scherer S.E."/>
            <person name="Li P.W."/>
            <person name="Hoskins R.A."/>
            <person name="Galle R.F."/>
            <person name="George R.A."/>
            <person name="Lewis S.E."/>
            <person name="Richards S."/>
            <person name="Ashburner M."/>
            <person name="Henderson S.N."/>
            <person name="Sutton G.G."/>
            <person name="Wortman J.R."/>
            <person name="Yandell M.D."/>
            <person name="Zhang Q."/>
            <person name="Chen L.X."/>
            <person name="Brandon R.C."/>
            <person name="Rogers Y.-H.C."/>
            <person name="Blazej R.G."/>
            <person name="Champe M."/>
            <person name="Pfeiffer B.D."/>
            <person name="Wan K.H."/>
            <person name="Doyle C."/>
            <person name="Baxter E.G."/>
            <person name="Helt G."/>
            <person name="Nelson C.R."/>
            <person name="Miklos G.L.G."/>
            <person name="Abril J.F."/>
            <person name="Agbayani A."/>
            <person name="An H.-J."/>
            <person name="Andrews-Pfannkoch C."/>
            <person name="Baldwin D."/>
            <person name="Ballew R.M."/>
            <person name="Basu A."/>
            <person name="Baxendale J."/>
            <person name="Bayraktaroglu L."/>
            <person name="Beasley E.M."/>
            <person name="Beeson K.Y."/>
            <person name="Benos P.V."/>
            <person name="Berman B.P."/>
            <person name="Bhandari D."/>
            <person name="Bolshakov S."/>
            <person name="Borkova D."/>
            <person name="Botchan M.R."/>
            <person name="Bouck J."/>
            <person name="Brokstein P."/>
            <person name="Brottier P."/>
            <person name="Burtis K.C."/>
            <person name="Busam D.A."/>
            <person name="Butler H."/>
            <person name="Cadieu E."/>
            <person name="Center A."/>
            <person name="Chandra I."/>
            <person name="Cherry J.M."/>
            <person name="Cawley S."/>
            <person name="Dahlke C."/>
            <person name="Davenport L.B."/>
            <person name="Davies P."/>
            <person name="de Pablos B."/>
            <person name="Delcher A."/>
            <person name="Deng Z."/>
            <person name="Mays A.D."/>
            <person name="Dew I."/>
            <person name="Dietz S.M."/>
            <person name="Dodson K."/>
            <person name="Doup L.E."/>
            <person name="Downes M."/>
            <person name="Dugan-Rocha S."/>
            <person name="Dunkov B.C."/>
            <person name="Dunn P."/>
            <person name="Durbin K.J."/>
            <person name="Evangelista C.C."/>
            <person name="Ferraz C."/>
            <person name="Ferriera S."/>
            <person name="Fleischmann W."/>
            <person name="Fosler C."/>
            <person name="Gabrielian A.E."/>
            <person name="Garg N.S."/>
            <person name="Gelbart W.M."/>
            <person name="Glasser K."/>
            <person name="Glodek A."/>
            <person name="Gong F."/>
            <person name="Gorrell J.H."/>
            <person name="Gu Z."/>
            <person name="Guan P."/>
            <person name="Harris M."/>
            <person name="Harris N.L."/>
            <person name="Harvey D.A."/>
            <person name="Heiman T.J."/>
            <person name="Hernandez J.R."/>
            <person name="Houck J."/>
            <person name="Hostin D."/>
            <person name="Houston K.A."/>
            <person name="Howland T.J."/>
            <person name="Wei M.-H."/>
            <person name="Ibegwam C."/>
            <person name="Jalali M."/>
            <person name="Kalush F."/>
            <person name="Karpen G.H."/>
            <person name="Ke Z."/>
            <person name="Kennison J.A."/>
            <person name="Ketchum K.A."/>
            <person name="Kimmel B.E."/>
            <person name="Kodira C.D."/>
            <person name="Kraft C.L."/>
            <person name="Kravitz S."/>
            <person name="Kulp D."/>
            <person name="Lai Z."/>
            <person name="Lasko P."/>
            <person name="Lei Y."/>
            <person name="Levitsky A.A."/>
            <person name="Li J.H."/>
            <person name="Li Z."/>
            <person name="Liang Y."/>
            <person name="Lin X."/>
            <person name="Liu X."/>
            <person name="Mattei B."/>
            <person name="McIntosh T.C."/>
            <person name="McLeod M.P."/>
            <person name="McPherson D."/>
            <person name="Merkulov G."/>
            <person name="Milshina N.V."/>
            <person name="Mobarry C."/>
            <person name="Morris J."/>
            <person name="Moshrefi A."/>
            <person name="Mount S.M."/>
            <person name="Moy M."/>
            <person name="Murphy B."/>
            <person name="Murphy L."/>
            <person name="Muzny D.M."/>
            <person name="Nelson D.L."/>
            <person name="Nelson D.R."/>
            <person name="Nelson K.A."/>
            <person name="Nixon K."/>
            <person name="Nusskern D.R."/>
            <person name="Pacleb J.M."/>
            <person name="Palazzolo M."/>
            <person name="Pittman G.S."/>
            <person name="Pan S."/>
            <person name="Pollard J."/>
            <person name="Puri V."/>
            <person name="Reese M.G."/>
            <person name="Reinert K."/>
            <person name="Remington K."/>
            <person name="Saunders R.D.C."/>
            <person name="Scheeler F."/>
            <person name="Shen H."/>
            <person name="Shue B.C."/>
            <person name="Siden-Kiamos I."/>
            <person name="Simpson M."/>
            <person name="Skupski M.P."/>
            <person name="Smith T.J."/>
            <person name="Spier E."/>
            <person name="Spradling A.C."/>
            <person name="Stapleton M."/>
            <person name="Strong R."/>
            <person name="Sun E."/>
            <person name="Svirskas R."/>
            <person name="Tector C."/>
            <person name="Turner R."/>
            <person name="Venter E."/>
            <person name="Wang A.H."/>
            <person name="Wang X."/>
            <person name="Wang Z.-Y."/>
            <person name="Wassarman D.A."/>
            <person name="Weinstock G.M."/>
            <person name="Weissenbach J."/>
            <person name="Williams S.M."/>
            <person name="Woodage T."/>
            <person name="Worley K.C."/>
            <person name="Wu D."/>
            <person name="Yang S."/>
            <person name="Yao Q.A."/>
            <person name="Ye J."/>
            <person name="Yeh R.-F."/>
            <person name="Zaveri J.S."/>
            <person name="Zhan M."/>
            <person name="Zhang G."/>
            <person name="Zhao Q."/>
            <person name="Zheng L."/>
            <person name="Zheng X.H."/>
            <person name="Zhong F.N."/>
            <person name="Zhong W."/>
            <person name="Zhou X."/>
            <person name="Zhu S.C."/>
            <person name="Zhu X."/>
            <person name="Smith H.O."/>
            <person name="Gibbs R.A."/>
            <person name="Myers E.W."/>
            <person name="Rubin G.M."/>
            <person name="Venter J.C."/>
        </authorList>
    </citation>
    <scope>NUCLEOTIDE SEQUENCE [LARGE SCALE GENOMIC DNA]</scope>
    <source>
        <strain>Berkeley</strain>
    </source>
</reference>
<reference key="2">
    <citation type="journal article" date="2002" name="Genome Biol.">
        <title>Annotation of the Drosophila melanogaster euchromatic genome: a systematic review.</title>
        <authorList>
            <person name="Misra S."/>
            <person name="Crosby M.A."/>
            <person name="Mungall C.J."/>
            <person name="Matthews B.B."/>
            <person name="Campbell K.S."/>
            <person name="Hradecky P."/>
            <person name="Huang Y."/>
            <person name="Kaminker J.S."/>
            <person name="Millburn G.H."/>
            <person name="Prochnik S.E."/>
            <person name="Smith C.D."/>
            <person name="Tupy J.L."/>
            <person name="Whitfield E.J."/>
            <person name="Bayraktaroglu L."/>
            <person name="Berman B.P."/>
            <person name="Bettencourt B.R."/>
            <person name="Celniker S.E."/>
            <person name="de Grey A.D.N.J."/>
            <person name="Drysdale R.A."/>
            <person name="Harris N.L."/>
            <person name="Richter J."/>
            <person name="Russo S."/>
            <person name="Schroeder A.J."/>
            <person name="Shu S.Q."/>
            <person name="Stapleton M."/>
            <person name="Yamada C."/>
            <person name="Ashburner M."/>
            <person name="Gelbart W.M."/>
            <person name="Rubin G.M."/>
            <person name="Lewis S.E."/>
        </authorList>
    </citation>
    <scope>GENOME REANNOTATION</scope>
    <source>
        <strain>Berkeley</strain>
    </source>
</reference>
<reference key="3">
    <citation type="journal article" date="2002" name="Genome Biol.">
        <title>A Drosophila full-length cDNA resource.</title>
        <authorList>
            <person name="Stapleton M."/>
            <person name="Carlson J.W."/>
            <person name="Brokstein P."/>
            <person name="Yu C."/>
            <person name="Champe M."/>
            <person name="George R.A."/>
            <person name="Guarin H."/>
            <person name="Kronmiller B."/>
            <person name="Pacleb J.M."/>
            <person name="Park S."/>
            <person name="Wan K.H."/>
            <person name="Rubin G.M."/>
            <person name="Celniker S.E."/>
        </authorList>
    </citation>
    <scope>NUCLEOTIDE SEQUENCE [LARGE SCALE MRNA]</scope>
    <source>
        <strain>Berkeley</strain>
        <tissue>Larva</tissue>
        <tissue>Pupae</tissue>
    </source>
</reference>
<reference key="4">
    <citation type="submission" date="2009-03" db="EMBL/GenBank/DDBJ databases">
        <authorList>
            <person name="Carlson J.W."/>
            <person name="Booth B."/>
            <person name="Frise E."/>
            <person name="Park S."/>
            <person name="Wan K.H."/>
            <person name="Yu C."/>
            <person name="Celniker S.E."/>
        </authorList>
    </citation>
    <scope>NUCLEOTIDE SEQUENCE [LARGE SCALE MRNA]</scope>
    <source>
        <strain>Berkeley</strain>
    </source>
</reference>
<proteinExistence type="evidence at transcript level"/>
<feature type="chain" id="PRO_0000119354" description="Probable V-type proton ATPase subunit d 2">
    <location>
        <begin position="1"/>
        <end position="350"/>
    </location>
</feature>
<feature type="sequence conflict" description="In Ref. 3; AAM49984." evidence="3" ref="3">
    <original>E</original>
    <variation>D</variation>
    <location>
        <position position="94"/>
    </location>
</feature>
<evidence type="ECO:0000250" key="1">
    <source>
        <dbReference type="UniProtKB" id="P61421"/>
    </source>
</evidence>
<evidence type="ECO:0000250" key="2">
    <source>
        <dbReference type="UniProtKB" id="Q80SY3"/>
    </source>
</evidence>
<evidence type="ECO:0000305" key="3"/>
<sequence>MSMIFNTEYGYLEALTRGFKNGMLKHSDYLNLTQCESLEDVMISIQGTDYGLIFGGEQSAPSVEVIERCLRDRLLQQYYYIRSHSTEPLTTFMEFIRYPFMIDNVALLVAGLNNHRSMKRLLRMCHPLGEFDQLGAIEVASNSAELFDAVLIDTPIARFVPRDLPMESLRYLDVEIVRAHLYRAYLEKFYAYCSQLGGNTANVMTNLLSFEADRRTITIAVNAIGSDIIPKERLKMFPTCGYLPKIALASMSTLNDTDKIRDVCNVFDGYGKMFDNLERDSDGMITLEDRFLMMEAKKNVQTFLQQYHFGIFYSFIKLKQLEVRNIVWISECIAQRQTDRINAFIPIPLD</sequence>